<evidence type="ECO:0000269" key="1">
    <source>
    </source>
</evidence>
<evidence type="ECO:0000269" key="2">
    <source>
    </source>
</evidence>
<evidence type="ECO:0000305" key="3"/>
<evidence type="ECO:0007829" key="4">
    <source>
        <dbReference type="PDB" id="1KDJ"/>
    </source>
</evidence>
<evidence type="ECO:0007829" key="5">
    <source>
        <dbReference type="PDB" id="2BZ7"/>
    </source>
</evidence>
<evidence type="ECO:0007829" key="6">
    <source>
        <dbReference type="PDB" id="2BZC"/>
    </source>
</evidence>
<gene>
    <name type="primary">PETE</name>
</gene>
<feature type="chain" id="PRO_0000085565" description="Plastocyanin">
    <location>
        <begin position="1"/>
        <end position="102"/>
    </location>
</feature>
<feature type="domain" description="Plastocyanin-like">
    <location>
        <begin position="1"/>
        <end position="102"/>
    </location>
</feature>
<feature type="binding site" evidence="1 2">
    <location>
        <position position="37"/>
    </location>
    <ligand>
        <name>Cu cation</name>
        <dbReference type="ChEBI" id="CHEBI:23378"/>
    </ligand>
</feature>
<feature type="binding site" evidence="1 2">
    <location>
        <position position="87"/>
    </location>
    <ligand>
        <name>Cu cation</name>
        <dbReference type="ChEBI" id="CHEBI:23378"/>
    </ligand>
</feature>
<feature type="binding site" evidence="1 2">
    <location>
        <position position="90"/>
    </location>
    <ligand>
        <name>Cu cation</name>
        <dbReference type="ChEBI" id="CHEBI:23378"/>
    </ligand>
</feature>
<feature type="binding site" evidence="1 2">
    <location>
        <position position="95"/>
    </location>
    <ligand>
        <name>Cu cation</name>
        <dbReference type="ChEBI" id="CHEBI:23378"/>
    </ligand>
</feature>
<feature type="strand" evidence="4">
    <location>
        <begin position="2"/>
        <end position="6"/>
    </location>
</feature>
<feature type="strand" evidence="4">
    <location>
        <begin position="14"/>
        <end position="21"/>
    </location>
</feature>
<feature type="strand" evidence="4">
    <location>
        <begin position="27"/>
        <end position="31"/>
    </location>
</feature>
<feature type="strand" evidence="4">
    <location>
        <begin position="33"/>
        <end position="35"/>
    </location>
</feature>
<feature type="helix" evidence="4">
    <location>
        <begin position="49"/>
        <end position="57"/>
    </location>
</feature>
<feature type="strand" evidence="5">
    <location>
        <begin position="68"/>
        <end position="70"/>
    </location>
</feature>
<feature type="strand" evidence="4">
    <location>
        <begin position="72"/>
        <end position="75"/>
    </location>
</feature>
<feature type="strand" evidence="4">
    <location>
        <begin position="81"/>
        <end position="86"/>
    </location>
</feature>
<feature type="turn" evidence="6">
    <location>
        <begin position="88"/>
        <end position="90"/>
    </location>
</feature>
<feature type="helix" evidence="4">
    <location>
        <begin position="91"/>
        <end position="93"/>
    </location>
</feature>
<feature type="strand" evidence="4">
    <location>
        <begin position="96"/>
        <end position="101"/>
    </location>
</feature>
<comment type="function">
    <text evidence="1 2">Participates in electron transfer between P700 and the cytochrome b6-f complex in photosystem I.</text>
</comment>
<comment type="cofactor">
    <cofactor evidence="1 2">
        <name>Cu(2+)</name>
        <dbReference type="ChEBI" id="CHEBI:29036"/>
    </cofactor>
    <text>The crystal structure with reduced Cu(1+) has also been determined (PubMed:10206999, PubMed:10529231).</text>
</comment>
<comment type="subcellular location">
    <subcellularLocation>
        <location evidence="1 2">Plastid</location>
        <location evidence="1 2">Chloroplast thylakoid membrane</location>
        <topology evidence="1 2">Peripheral membrane protein</topology>
        <orientation evidence="1 2">Lumenal side</orientation>
    </subcellularLocation>
    <text>Loosely bound to the inner thylakoid membrane surface in chloroplasts (PubMed:10206999, PubMed:10529231).</text>
</comment>
<comment type="similarity">
    <text evidence="3">Belongs to the plastocyanin family.</text>
</comment>
<organism>
    <name type="scientific">Dryopteris crassirhizoma</name>
    <name type="common">Thick stemmed wood fern</name>
    <dbReference type="NCBI Taxonomy" id="97234"/>
    <lineage>
        <taxon>Eukaryota</taxon>
        <taxon>Viridiplantae</taxon>
        <taxon>Streptophyta</taxon>
        <taxon>Embryophyta</taxon>
        <taxon>Tracheophyta</taxon>
        <taxon>Polypodiopsida</taxon>
        <taxon>Polypodiidae</taxon>
        <taxon>Polypodiales</taxon>
        <taxon>Polypodiineae</taxon>
        <taxon>Dryopteridaceae</taxon>
        <taxon>Dryopteridoideae</taxon>
        <taxon>Dryopteris</taxon>
    </lineage>
</organism>
<name>PLAS_DRYCA</name>
<reference key="1">
    <citation type="journal article" date="1999" name="J. Biol. Chem.">
        <title>The structure and unusual pH dependence of plastocyanin from the fern Dryopteris crassirhizoma. The protonation of an active site histidine is hindered by pi-pi interactions.</title>
        <authorList>
            <person name="Kohzuma T."/>
            <person name="Inoue T."/>
            <person name="Yoshizaki F."/>
            <person name="Sasakawa Y."/>
            <person name="Onodera K."/>
            <person name="Nagatomo S."/>
            <person name="Kitagawa T."/>
            <person name="Uzawa S."/>
            <person name="Isobe Y."/>
            <person name="Sugimura Y."/>
            <person name="Gotowda M."/>
            <person name="Kai Y."/>
        </authorList>
    </citation>
    <scope>PROTEIN SEQUENCE</scope>
    <scope>X-RAY CRYSTALLOGRAPHY (1.7 ANGSTROMS) IN COMPLEX WITH COPPER</scope>
    <scope>FUNCTION</scope>
    <scope>COFACTOR</scope>
    <scope>SUBCELLULAR LOCATION</scope>
    <source>
        <tissue>Leaf</tissue>
    </source>
</reference>
<reference key="2">
    <citation type="journal article" date="1999" name="Biochemistry">
        <title>Structure comparison between oxidized and reduced plastocyanin from a fern, Dryopteris crassirhizoma.</title>
        <authorList>
            <person name="Inoue T."/>
            <person name="Gotowda M."/>
            <person name="Sugawara H."/>
            <person name="Kohzuma T."/>
            <person name="Yoshizaki F."/>
            <person name="Sugimura Y."/>
            <person name="Kai Y."/>
        </authorList>
    </citation>
    <scope>X-RAY CRYSTALLOGRAPHY (1.7 ANGSTROMS) IN COMPLEX WITH COPPER</scope>
    <scope>FUNCTION</scope>
    <scope>COFACTOR</scope>
    <scope>SUBCELLULAR LOCATION</scope>
</reference>
<accession>Q7SIB8</accession>
<keyword id="KW-0002">3D-structure</keyword>
<keyword id="KW-0150">Chloroplast</keyword>
<keyword id="KW-0186">Copper</keyword>
<keyword id="KW-0903">Direct protein sequencing</keyword>
<keyword id="KW-0249">Electron transport</keyword>
<keyword id="KW-0472">Membrane</keyword>
<keyword id="KW-0479">Metal-binding</keyword>
<keyword id="KW-0934">Plastid</keyword>
<keyword id="KW-0793">Thylakoid</keyword>
<keyword id="KW-0813">Transport</keyword>
<dbReference type="PDB" id="1KDI">
    <property type="method" value="X-ray"/>
    <property type="resolution" value="1.80 A"/>
    <property type="chains" value="A=1-102"/>
</dbReference>
<dbReference type="PDB" id="1KDJ">
    <property type="method" value="X-ray"/>
    <property type="resolution" value="1.70 A"/>
    <property type="chains" value="A=1-102"/>
</dbReference>
<dbReference type="PDB" id="2BZ7">
    <property type="method" value="X-ray"/>
    <property type="resolution" value="1.76 A"/>
    <property type="chains" value="A=1-102"/>
</dbReference>
<dbReference type="PDB" id="2BZC">
    <property type="method" value="X-ray"/>
    <property type="resolution" value="1.79 A"/>
    <property type="chains" value="A=1-102"/>
</dbReference>
<dbReference type="PDBsum" id="1KDI"/>
<dbReference type="PDBsum" id="1KDJ"/>
<dbReference type="PDBsum" id="2BZ7"/>
<dbReference type="PDBsum" id="2BZC"/>
<dbReference type="BMRB" id="Q7SIB8"/>
<dbReference type="SMR" id="Q7SIB8"/>
<dbReference type="EvolutionaryTrace" id="Q7SIB8"/>
<dbReference type="GO" id="GO:0009535">
    <property type="term" value="C:chloroplast thylakoid membrane"/>
    <property type="evidence" value="ECO:0007669"/>
    <property type="project" value="UniProtKB-SubCell"/>
</dbReference>
<dbReference type="GO" id="GO:0005507">
    <property type="term" value="F:copper ion binding"/>
    <property type="evidence" value="ECO:0007669"/>
    <property type="project" value="InterPro"/>
</dbReference>
<dbReference type="GO" id="GO:0009055">
    <property type="term" value="F:electron transfer activity"/>
    <property type="evidence" value="ECO:0007669"/>
    <property type="project" value="InterPro"/>
</dbReference>
<dbReference type="Gene3D" id="2.60.40.420">
    <property type="entry name" value="Cupredoxins - blue copper proteins"/>
    <property type="match status" value="1"/>
</dbReference>
<dbReference type="InterPro" id="IPR000923">
    <property type="entry name" value="BlueCu_1"/>
</dbReference>
<dbReference type="InterPro" id="IPR028871">
    <property type="entry name" value="BlueCu_1_BS"/>
</dbReference>
<dbReference type="InterPro" id="IPR001235">
    <property type="entry name" value="Copper_blue_Plastocyanin"/>
</dbReference>
<dbReference type="InterPro" id="IPR008972">
    <property type="entry name" value="Cupredoxin"/>
</dbReference>
<dbReference type="InterPro" id="IPR002387">
    <property type="entry name" value="Plastocyanin"/>
</dbReference>
<dbReference type="NCBIfam" id="TIGR02656">
    <property type="entry name" value="cyanin_plasto"/>
    <property type="match status" value="1"/>
</dbReference>
<dbReference type="PANTHER" id="PTHR34192">
    <property type="entry name" value="PLASTOCYANIN MAJOR ISOFORM, CHLOROPLASTIC-RELATED"/>
    <property type="match status" value="1"/>
</dbReference>
<dbReference type="PANTHER" id="PTHR34192:SF10">
    <property type="entry name" value="PLASTOCYANIN MAJOR ISOFORM, CHLOROPLASTIC-RELATED"/>
    <property type="match status" value="1"/>
</dbReference>
<dbReference type="Pfam" id="PF00127">
    <property type="entry name" value="Copper-bind"/>
    <property type="match status" value="1"/>
</dbReference>
<dbReference type="PRINTS" id="PR00156">
    <property type="entry name" value="COPPERBLUE"/>
</dbReference>
<dbReference type="PRINTS" id="PR00157">
    <property type="entry name" value="PLASTOCYANIN"/>
</dbReference>
<dbReference type="SUPFAM" id="SSF49503">
    <property type="entry name" value="Cupredoxins"/>
    <property type="match status" value="1"/>
</dbReference>
<dbReference type="PROSITE" id="PS00196">
    <property type="entry name" value="COPPER_BLUE"/>
    <property type="match status" value="1"/>
</dbReference>
<proteinExistence type="evidence at protein level"/>
<protein>
    <recommendedName>
        <fullName>Plastocyanin</fullName>
    </recommendedName>
</protein>
<sequence>AKVEVGDEVGNFKFYPDSITVSAGEAVEFTLVGETGHNIVFDIPAGAPGTVASELKAASMDENDLLSEDEPSFKAKVSTPGTYTFYCTPHKSANMKGTLTVK</sequence>